<sequence length="862" mass="98195">MSTAAIPTDAAVQAAIAEARARLADGSMRIRMAYEGHPATSTVLKGRAHLVDETIHRLWRACAMPADVALLAVGGYGRGELFPCSDVDLMVLLPDTADDAMQARLSVLLGALWDVGLEIGHSARTVAEAIDAAEQDITVQTNLLESRLLEGNRPLFEEFCRRYRALLDVRVFFKAKQLEQEKRYARYNDTPYALEPNCKESPGGLRDLQMLGWIARAAGLGRNWRDLARRRLITGAEARDLRSIERFLQHVRIRLHYLTGRSEDRLLFDYQERLASALGIEATAAKRASEVFMQRYYVNAKKVTQTNTILLQNYGVEIFPRRAGAAIVINERFQAVRELLDMREDDTFARHPSALLECFLILQQRSELKGMTARTLRALWLNRKRINAAFRADPHNRELFVAILQQKRGIVHEFRRMNQYGILSGYLPSWRRIVGQMQHDLFHVYTVDQHIMMVLRNMRRFTMGEHAHEYPLMAQLIMAFDRHWLLYVAALFHDIAKGRGGDHSKLGTIDAREFCEHHHLAREDADLVVWLVEHHLTMSHVAQKEDTSDPAVIGRFADTVGTERRLTALYLLTHADIRGTSPKVWNGWKGKLLEDLFFATRRLLRGATPQEALGLDDRQENARALLRYHGLRPGVEDALWAQLDAVYFMRHSAEEIAWHSRTLYYRPDALEPVVKARVSDADQGVQVMVFTRDQKDLFVRLTGFFGRLGFSILDAKVHTTRHGYALDSFMLQDPGNAEHYRDVITLIEHELTERLKKSAPPDRPSAGRLSRQVKHFPITPRVSILPDESGRHYILSLTAADRRGLLFAVAEVLAQNGIVLHTAKIATLGERVEDTFLLSGNGLSQDARVVKIERELLQRLHI</sequence>
<organism>
    <name type="scientific">Aromatoleum aromaticum (strain DSM 19018 / LMG 30748 / EbN1)</name>
    <name type="common">Azoarcus sp. (strain EbN1)</name>
    <dbReference type="NCBI Taxonomy" id="76114"/>
    <lineage>
        <taxon>Bacteria</taxon>
        <taxon>Pseudomonadati</taxon>
        <taxon>Pseudomonadota</taxon>
        <taxon>Betaproteobacteria</taxon>
        <taxon>Rhodocyclales</taxon>
        <taxon>Rhodocyclaceae</taxon>
        <taxon>Aromatoleum</taxon>
    </lineage>
</organism>
<keyword id="KW-0378">Hydrolase</keyword>
<keyword id="KW-0460">Magnesium</keyword>
<keyword id="KW-0511">Multifunctional enzyme</keyword>
<keyword id="KW-0548">Nucleotidyltransferase</keyword>
<keyword id="KW-1185">Reference proteome</keyword>
<keyword id="KW-0677">Repeat</keyword>
<keyword id="KW-0808">Transferase</keyword>
<protein>
    <recommendedName>
        <fullName evidence="1">Bifunctional uridylyltransferase/uridylyl-removing enzyme</fullName>
        <shortName evidence="1">UTase/UR</shortName>
    </recommendedName>
    <alternativeName>
        <fullName evidence="1">Bifunctional [protein-PII] modification enzyme</fullName>
    </alternativeName>
    <alternativeName>
        <fullName evidence="1">Bifunctional nitrogen sensor protein</fullName>
    </alternativeName>
    <domain>
        <recommendedName>
            <fullName evidence="1">[Protein-PII] uridylyltransferase</fullName>
            <shortName evidence="1">PII uridylyltransferase</shortName>
            <shortName evidence="1">UTase</shortName>
            <ecNumber evidence="1">2.7.7.59</ecNumber>
        </recommendedName>
    </domain>
    <domain>
        <recommendedName>
            <fullName evidence="1">[Protein-PII]-UMP uridylyl-removing enzyme</fullName>
            <shortName evidence="1">UR</shortName>
            <ecNumber evidence="1">3.1.4.-</ecNumber>
        </recommendedName>
    </domain>
</protein>
<accession>Q5NZH8</accession>
<proteinExistence type="inferred from homology"/>
<name>GLND_AROAE</name>
<evidence type="ECO:0000255" key="1">
    <source>
        <dbReference type="HAMAP-Rule" id="MF_00277"/>
    </source>
</evidence>
<evidence type="ECO:0000255" key="2">
    <source>
        <dbReference type="PROSITE-ProRule" id="PRU01175"/>
    </source>
</evidence>
<feature type="chain" id="PRO_0000192715" description="Bifunctional uridylyltransferase/uridylyl-removing enzyme">
    <location>
        <begin position="1"/>
        <end position="862"/>
    </location>
</feature>
<feature type="domain" description="HD" evidence="2">
    <location>
        <begin position="447"/>
        <end position="563"/>
    </location>
</feature>
<feature type="domain" description="ACT 1" evidence="1">
    <location>
        <begin position="686"/>
        <end position="765"/>
    </location>
</feature>
<feature type="domain" description="ACT 2" evidence="1">
    <location>
        <begin position="794"/>
        <end position="862"/>
    </location>
</feature>
<feature type="region of interest" description="Uridylyltransferase">
    <location>
        <begin position="1"/>
        <end position="328"/>
    </location>
</feature>
<feature type="region of interest" description="Uridylyl-removing">
    <location>
        <begin position="329"/>
        <end position="685"/>
    </location>
</feature>
<reference key="1">
    <citation type="journal article" date="2005" name="Arch. Microbiol.">
        <title>The genome sequence of an anaerobic aromatic-degrading denitrifying bacterium, strain EbN1.</title>
        <authorList>
            <person name="Rabus R."/>
            <person name="Kube M."/>
            <person name="Heider J."/>
            <person name="Beck A."/>
            <person name="Heitmann K."/>
            <person name="Widdel F."/>
            <person name="Reinhardt R."/>
        </authorList>
    </citation>
    <scope>NUCLEOTIDE SEQUENCE [LARGE SCALE GENOMIC DNA]</scope>
    <source>
        <strain>DSM 19018 / LMG 30748 / EbN1</strain>
    </source>
</reference>
<dbReference type="EC" id="2.7.7.59" evidence="1"/>
<dbReference type="EC" id="3.1.4.-" evidence="1"/>
<dbReference type="EMBL" id="CR555306">
    <property type="protein sequence ID" value="CAI09536.1"/>
    <property type="molecule type" value="Genomic_DNA"/>
</dbReference>
<dbReference type="RefSeq" id="WP_011239196.1">
    <property type="nucleotide sequence ID" value="NC_006513.1"/>
</dbReference>
<dbReference type="SMR" id="Q5NZH8"/>
<dbReference type="STRING" id="76114.ebA5982"/>
<dbReference type="KEGG" id="eba:ebA5982"/>
<dbReference type="eggNOG" id="COG2844">
    <property type="taxonomic scope" value="Bacteria"/>
</dbReference>
<dbReference type="HOGENOM" id="CLU_012833_0_0_4"/>
<dbReference type="OrthoDB" id="9758038at2"/>
<dbReference type="Proteomes" id="UP000006552">
    <property type="component" value="Chromosome"/>
</dbReference>
<dbReference type="GO" id="GO:0008773">
    <property type="term" value="F:[protein-PII] uridylyltransferase activity"/>
    <property type="evidence" value="ECO:0007669"/>
    <property type="project" value="UniProtKB-UniRule"/>
</dbReference>
<dbReference type="GO" id="GO:0008081">
    <property type="term" value="F:phosphoric diester hydrolase activity"/>
    <property type="evidence" value="ECO:0007669"/>
    <property type="project" value="UniProtKB-UniRule"/>
</dbReference>
<dbReference type="GO" id="GO:0006808">
    <property type="term" value="P:regulation of nitrogen utilization"/>
    <property type="evidence" value="ECO:0007669"/>
    <property type="project" value="UniProtKB-UniRule"/>
</dbReference>
<dbReference type="CDD" id="cd04899">
    <property type="entry name" value="ACT_ACR-UUR-like_2"/>
    <property type="match status" value="1"/>
</dbReference>
<dbReference type="CDD" id="cd04900">
    <property type="entry name" value="ACT_UUR-like_1"/>
    <property type="match status" value="1"/>
</dbReference>
<dbReference type="CDD" id="cd00077">
    <property type="entry name" value="HDc"/>
    <property type="match status" value="1"/>
</dbReference>
<dbReference type="CDD" id="cd05401">
    <property type="entry name" value="NT_GlnE_GlnD_like"/>
    <property type="match status" value="1"/>
</dbReference>
<dbReference type="Gene3D" id="3.30.70.260">
    <property type="match status" value="1"/>
</dbReference>
<dbReference type="Gene3D" id="1.10.3090.10">
    <property type="entry name" value="cca-adding enzyme, domain 2"/>
    <property type="match status" value="1"/>
</dbReference>
<dbReference type="HAMAP" id="MF_00277">
    <property type="entry name" value="PII_uridylyl_transf"/>
    <property type="match status" value="1"/>
</dbReference>
<dbReference type="InterPro" id="IPR045865">
    <property type="entry name" value="ACT-like_dom_sf"/>
</dbReference>
<dbReference type="InterPro" id="IPR002912">
    <property type="entry name" value="ACT_dom"/>
</dbReference>
<dbReference type="InterPro" id="IPR003607">
    <property type="entry name" value="HD/PDEase_dom"/>
</dbReference>
<dbReference type="InterPro" id="IPR006674">
    <property type="entry name" value="HD_domain"/>
</dbReference>
<dbReference type="InterPro" id="IPR043519">
    <property type="entry name" value="NT_sf"/>
</dbReference>
<dbReference type="InterPro" id="IPR013546">
    <property type="entry name" value="PII_UdlTrfase/GS_AdlTrfase"/>
</dbReference>
<dbReference type="InterPro" id="IPR010043">
    <property type="entry name" value="UTase/UR"/>
</dbReference>
<dbReference type="NCBIfam" id="NF002837">
    <property type="entry name" value="PRK03059.1"/>
    <property type="match status" value="1"/>
</dbReference>
<dbReference type="NCBIfam" id="TIGR01693">
    <property type="entry name" value="UTase_glnD"/>
    <property type="match status" value="1"/>
</dbReference>
<dbReference type="PANTHER" id="PTHR47320">
    <property type="entry name" value="BIFUNCTIONAL URIDYLYLTRANSFERASE/URIDYLYL-REMOVING ENZYME"/>
    <property type="match status" value="1"/>
</dbReference>
<dbReference type="PANTHER" id="PTHR47320:SF1">
    <property type="entry name" value="BIFUNCTIONAL URIDYLYLTRANSFERASE_URIDYLYL-REMOVING ENZYME"/>
    <property type="match status" value="1"/>
</dbReference>
<dbReference type="Pfam" id="PF08335">
    <property type="entry name" value="GlnD_UR_UTase"/>
    <property type="match status" value="1"/>
</dbReference>
<dbReference type="Pfam" id="PF01966">
    <property type="entry name" value="HD"/>
    <property type="match status" value="1"/>
</dbReference>
<dbReference type="PIRSF" id="PIRSF006288">
    <property type="entry name" value="PII_uridyltransf"/>
    <property type="match status" value="1"/>
</dbReference>
<dbReference type="SMART" id="SM00471">
    <property type="entry name" value="HDc"/>
    <property type="match status" value="1"/>
</dbReference>
<dbReference type="SUPFAM" id="SSF55021">
    <property type="entry name" value="ACT-like"/>
    <property type="match status" value="2"/>
</dbReference>
<dbReference type="SUPFAM" id="SSF109604">
    <property type="entry name" value="HD-domain/PDEase-like"/>
    <property type="match status" value="1"/>
</dbReference>
<dbReference type="SUPFAM" id="SSF81301">
    <property type="entry name" value="Nucleotidyltransferase"/>
    <property type="match status" value="1"/>
</dbReference>
<dbReference type="SUPFAM" id="SSF81593">
    <property type="entry name" value="Nucleotidyltransferase substrate binding subunit/domain"/>
    <property type="match status" value="1"/>
</dbReference>
<dbReference type="PROSITE" id="PS51671">
    <property type="entry name" value="ACT"/>
    <property type="match status" value="2"/>
</dbReference>
<dbReference type="PROSITE" id="PS51831">
    <property type="entry name" value="HD"/>
    <property type="match status" value="1"/>
</dbReference>
<gene>
    <name evidence="1" type="primary">glnD</name>
    <name type="ordered locus">AZOSEA34110</name>
    <name type="ORF">ebA5982</name>
</gene>
<comment type="function">
    <text evidence="1">Modifies, by uridylylation and deuridylylation, the PII regulatory proteins (GlnB and homologs), in response to the nitrogen status of the cell that GlnD senses through the glutamine level. Under low glutamine levels, catalyzes the conversion of the PII proteins and UTP to PII-UMP and PPi, while under higher glutamine levels, GlnD hydrolyzes PII-UMP to PII and UMP (deuridylylation). Thus, controls uridylylation state and activity of the PII proteins, and plays an important role in the regulation of nitrogen assimilation and metabolism.</text>
</comment>
<comment type="catalytic activity">
    <reaction evidence="1">
        <text>[protein-PII]-L-tyrosine + UTP = [protein-PII]-uridylyl-L-tyrosine + diphosphate</text>
        <dbReference type="Rhea" id="RHEA:13673"/>
        <dbReference type="Rhea" id="RHEA-COMP:12147"/>
        <dbReference type="Rhea" id="RHEA-COMP:12148"/>
        <dbReference type="ChEBI" id="CHEBI:33019"/>
        <dbReference type="ChEBI" id="CHEBI:46398"/>
        <dbReference type="ChEBI" id="CHEBI:46858"/>
        <dbReference type="ChEBI" id="CHEBI:90602"/>
        <dbReference type="EC" id="2.7.7.59"/>
    </reaction>
</comment>
<comment type="catalytic activity">
    <reaction evidence="1">
        <text>[protein-PII]-uridylyl-L-tyrosine + H2O = [protein-PII]-L-tyrosine + UMP + H(+)</text>
        <dbReference type="Rhea" id="RHEA:48600"/>
        <dbReference type="Rhea" id="RHEA-COMP:12147"/>
        <dbReference type="Rhea" id="RHEA-COMP:12148"/>
        <dbReference type="ChEBI" id="CHEBI:15377"/>
        <dbReference type="ChEBI" id="CHEBI:15378"/>
        <dbReference type="ChEBI" id="CHEBI:46858"/>
        <dbReference type="ChEBI" id="CHEBI:57865"/>
        <dbReference type="ChEBI" id="CHEBI:90602"/>
    </reaction>
</comment>
<comment type="cofactor">
    <cofactor evidence="1">
        <name>Mg(2+)</name>
        <dbReference type="ChEBI" id="CHEBI:18420"/>
    </cofactor>
</comment>
<comment type="activity regulation">
    <text evidence="1">Uridylyltransferase (UTase) activity is inhibited by glutamine, while glutamine activates uridylyl-removing (UR) activity.</text>
</comment>
<comment type="domain">
    <text evidence="1">Has four distinct domains: an N-terminal nucleotidyltransferase (NT) domain responsible for UTase activity, a central HD domain that encodes UR activity, and two C-terminal ACT domains that seem to have a role in glutamine sensing.</text>
</comment>
<comment type="similarity">
    <text evidence="1">Belongs to the GlnD family.</text>
</comment>